<organism>
    <name type="scientific">Escherichia coli O6:H1 (strain CFT073 / ATCC 700928 / UPEC)</name>
    <dbReference type="NCBI Taxonomy" id="199310"/>
    <lineage>
        <taxon>Bacteria</taxon>
        <taxon>Pseudomonadati</taxon>
        <taxon>Pseudomonadota</taxon>
        <taxon>Gammaproteobacteria</taxon>
        <taxon>Enterobacterales</taxon>
        <taxon>Enterobacteriaceae</taxon>
        <taxon>Escherichia</taxon>
    </lineage>
</organism>
<name>XERD_ECOL6</name>
<dbReference type="EMBL" id="AE014075">
    <property type="protein sequence ID" value="AAN81922.1"/>
    <property type="molecule type" value="Genomic_DNA"/>
</dbReference>
<dbReference type="RefSeq" id="WP_000806638.1">
    <property type="nucleotide sequence ID" value="NZ_CP051263.1"/>
</dbReference>
<dbReference type="SMR" id="P0A8P9"/>
<dbReference type="STRING" id="199310.c3474"/>
<dbReference type="GeneID" id="93779108"/>
<dbReference type="KEGG" id="ecc:c3474"/>
<dbReference type="eggNOG" id="COG4974">
    <property type="taxonomic scope" value="Bacteria"/>
</dbReference>
<dbReference type="HOGENOM" id="CLU_027562_9_0_6"/>
<dbReference type="BioCyc" id="ECOL199310:C3474-MONOMER"/>
<dbReference type="Proteomes" id="UP000001410">
    <property type="component" value="Chromosome"/>
</dbReference>
<dbReference type="GO" id="GO:0005737">
    <property type="term" value="C:cytoplasm"/>
    <property type="evidence" value="ECO:0007669"/>
    <property type="project" value="UniProtKB-SubCell"/>
</dbReference>
<dbReference type="GO" id="GO:0003677">
    <property type="term" value="F:DNA binding"/>
    <property type="evidence" value="ECO:0007669"/>
    <property type="project" value="UniProtKB-KW"/>
</dbReference>
<dbReference type="GO" id="GO:0009037">
    <property type="term" value="F:tyrosine-based site-specific recombinase activity"/>
    <property type="evidence" value="ECO:0007669"/>
    <property type="project" value="UniProtKB-UniRule"/>
</dbReference>
<dbReference type="GO" id="GO:0051301">
    <property type="term" value="P:cell division"/>
    <property type="evidence" value="ECO:0007669"/>
    <property type="project" value="UniProtKB-KW"/>
</dbReference>
<dbReference type="GO" id="GO:0007059">
    <property type="term" value="P:chromosome segregation"/>
    <property type="evidence" value="ECO:0007669"/>
    <property type="project" value="UniProtKB-UniRule"/>
</dbReference>
<dbReference type="GO" id="GO:0006313">
    <property type="term" value="P:DNA transposition"/>
    <property type="evidence" value="ECO:0007669"/>
    <property type="project" value="UniProtKB-UniRule"/>
</dbReference>
<dbReference type="CDD" id="cd00798">
    <property type="entry name" value="INT_XerDC_C"/>
    <property type="match status" value="1"/>
</dbReference>
<dbReference type="FunFam" id="1.10.150.130:FF:000002">
    <property type="entry name" value="Tyrosine recombinase XerD"/>
    <property type="match status" value="1"/>
</dbReference>
<dbReference type="FunFam" id="1.10.443.10:FF:000001">
    <property type="entry name" value="Tyrosine recombinase XerD"/>
    <property type="match status" value="1"/>
</dbReference>
<dbReference type="Gene3D" id="1.10.150.130">
    <property type="match status" value="1"/>
</dbReference>
<dbReference type="Gene3D" id="1.10.443.10">
    <property type="entry name" value="Intergrase catalytic core"/>
    <property type="match status" value="1"/>
</dbReference>
<dbReference type="HAMAP" id="MF_01808">
    <property type="entry name" value="Recomb_XerC_XerD"/>
    <property type="match status" value="1"/>
</dbReference>
<dbReference type="HAMAP" id="MF_01807">
    <property type="entry name" value="Recomb_XerD"/>
    <property type="match status" value="1"/>
</dbReference>
<dbReference type="InterPro" id="IPR044068">
    <property type="entry name" value="CB"/>
</dbReference>
<dbReference type="InterPro" id="IPR011010">
    <property type="entry name" value="DNA_brk_join_enz"/>
</dbReference>
<dbReference type="InterPro" id="IPR013762">
    <property type="entry name" value="Integrase-like_cat_sf"/>
</dbReference>
<dbReference type="InterPro" id="IPR002104">
    <property type="entry name" value="Integrase_catalytic"/>
</dbReference>
<dbReference type="InterPro" id="IPR010998">
    <property type="entry name" value="Integrase_recombinase_N"/>
</dbReference>
<dbReference type="InterPro" id="IPR004107">
    <property type="entry name" value="Integrase_SAM-like_N"/>
</dbReference>
<dbReference type="InterPro" id="IPR011932">
    <property type="entry name" value="Recomb_XerD"/>
</dbReference>
<dbReference type="InterPro" id="IPR023009">
    <property type="entry name" value="Tyrosine_recombinase_XerC/XerD"/>
</dbReference>
<dbReference type="InterPro" id="IPR050090">
    <property type="entry name" value="Tyrosine_recombinase_XerCD"/>
</dbReference>
<dbReference type="NCBIfam" id="NF001399">
    <property type="entry name" value="PRK00283.1"/>
    <property type="match status" value="1"/>
</dbReference>
<dbReference type="NCBIfam" id="TIGR02225">
    <property type="entry name" value="recomb_XerD"/>
    <property type="match status" value="1"/>
</dbReference>
<dbReference type="PANTHER" id="PTHR30349">
    <property type="entry name" value="PHAGE INTEGRASE-RELATED"/>
    <property type="match status" value="1"/>
</dbReference>
<dbReference type="PANTHER" id="PTHR30349:SF90">
    <property type="entry name" value="TYROSINE RECOMBINASE XERD"/>
    <property type="match status" value="1"/>
</dbReference>
<dbReference type="Pfam" id="PF02899">
    <property type="entry name" value="Phage_int_SAM_1"/>
    <property type="match status" value="1"/>
</dbReference>
<dbReference type="Pfam" id="PF00589">
    <property type="entry name" value="Phage_integrase"/>
    <property type="match status" value="1"/>
</dbReference>
<dbReference type="SUPFAM" id="SSF56349">
    <property type="entry name" value="DNA breaking-rejoining enzymes"/>
    <property type="match status" value="1"/>
</dbReference>
<dbReference type="SUPFAM" id="SSF47823">
    <property type="entry name" value="lambda integrase-like, N-terminal domain"/>
    <property type="match status" value="1"/>
</dbReference>
<dbReference type="PROSITE" id="PS51900">
    <property type="entry name" value="CB"/>
    <property type="match status" value="1"/>
</dbReference>
<dbReference type="PROSITE" id="PS51898">
    <property type="entry name" value="TYR_RECOMBINASE"/>
    <property type="match status" value="1"/>
</dbReference>
<protein>
    <recommendedName>
        <fullName>Tyrosine recombinase XerD</fullName>
    </recommendedName>
</protein>
<accession>P0A8P9</accession>
<accession>P21891</accession>
<feature type="chain" id="PRO_0000095387" description="Tyrosine recombinase XerD">
    <location>
        <begin position="1"/>
        <end position="298"/>
    </location>
</feature>
<feature type="domain" description="Core-binding (CB)" evidence="3">
    <location>
        <begin position="2"/>
        <end position="87"/>
    </location>
</feature>
<feature type="domain" description="Tyr recombinase" evidence="2">
    <location>
        <begin position="108"/>
        <end position="292"/>
    </location>
</feature>
<feature type="active site" evidence="2">
    <location>
        <position position="148"/>
    </location>
</feature>
<feature type="active site" evidence="2">
    <location>
        <position position="172"/>
    </location>
</feature>
<feature type="active site" evidence="2">
    <location>
        <position position="244"/>
    </location>
</feature>
<feature type="active site" evidence="2">
    <location>
        <position position="247"/>
    </location>
</feature>
<feature type="active site" evidence="2">
    <location>
        <position position="270"/>
    </location>
</feature>
<feature type="active site" description="O-(3'-phospho-DNA)-tyrosine intermediate" evidence="2">
    <location>
        <position position="279"/>
    </location>
</feature>
<reference key="1">
    <citation type="journal article" date="2002" name="Proc. Natl. Acad. Sci. U.S.A.">
        <title>Extensive mosaic structure revealed by the complete genome sequence of uropathogenic Escherichia coli.</title>
        <authorList>
            <person name="Welch R.A."/>
            <person name="Burland V."/>
            <person name="Plunkett G. III"/>
            <person name="Redford P."/>
            <person name="Roesch P."/>
            <person name="Rasko D."/>
            <person name="Buckles E.L."/>
            <person name="Liou S.-R."/>
            <person name="Boutin A."/>
            <person name="Hackett J."/>
            <person name="Stroud D."/>
            <person name="Mayhew G.F."/>
            <person name="Rose D.J."/>
            <person name="Zhou S."/>
            <person name="Schwartz D.C."/>
            <person name="Perna N.T."/>
            <person name="Mobley H.L.T."/>
            <person name="Donnenberg M.S."/>
            <person name="Blattner F.R."/>
        </authorList>
    </citation>
    <scope>NUCLEOTIDE SEQUENCE [LARGE SCALE GENOMIC DNA]</scope>
    <source>
        <strain>CFT073 / ATCC 700928 / UPEC</strain>
    </source>
</reference>
<sequence>MKQDLARIEQFLDALWLEKNLAENTLNAYRRDLSMMVEWLHHRGLTLATAQSDDLQALLAERLEGGYKATSSARLLSAVRRLFQYLYREKFREDDPSAHLASPKLPQRLPKDLSEAQVERLLQAPLIDQPLELRDKAMLEVLYATGLRVSELVGLTMSDISLRQGVVRVIGKGNKERLVPLGEEAVYWLETYLEHGRPWLLNGVSIDVLFPSQRAQQMTRQTFWHRIKHYAVLAGIDSEKLSPHVLRHAFATHLLNHGADLRVVQMLLGHSDLSTTQIYTHVATERLRQLHQQHHPRA</sequence>
<keyword id="KW-0131">Cell cycle</keyword>
<keyword id="KW-0132">Cell division</keyword>
<keyword id="KW-0159">Chromosome partition</keyword>
<keyword id="KW-0963">Cytoplasm</keyword>
<keyword id="KW-0229">DNA integration</keyword>
<keyword id="KW-0233">DNA recombination</keyword>
<keyword id="KW-0238">DNA-binding</keyword>
<keyword id="KW-1185">Reference proteome</keyword>
<proteinExistence type="inferred from homology"/>
<comment type="function">
    <text evidence="1">Site-specific tyrosine recombinase, which acts by catalyzing the cutting and rejoining of the recombining DNA molecules. Binds cooperatively to specific DNA consensus sequences that are separated from XerC binding sites by a short central region, forming the heterotetrameric XerC-XerD complex that recombines DNA substrates. The complex is essential to convert dimers of the bacterial chromosome into monomers to permit their segregation at cell division. It also contributes to the segregational stability of plasmids. In the complex XerD specifically exchanges the bottom DNA strands (By similarity).</text>
</comment>
<comment type="activity regulation">
    <text evidence="1">FtsK may regulate the catalytic switch between XerC and XerD in the heterotetrameric complex during the two steps of the recombination process.</text>
</comment>
<comment type="subunit">
    <text evidence="1">Forms a cyclic heterotetrameric complex composed of two molecules of XerC and two molecules of XerD, in which XerC interacts with XerD via its C-terminal region, XerD interacts with XerC via its C-terminal region and so on.</text>
</comment>
<comment type="subcellular location">
    <subcellularLocation>
        <location evidence="1">Cytoplasm</location>
    </subcellularLocation>
</comment>
<comment type="similarity">
    <text evidence="4">Belongs to the 'phage' integrase family. XerD subfamily.</text>
</comment>
<gene>
    <name type="primary">xerD</name>
    <name type="ordered locus">c3474</name>
</gene>
<evidence type="ECO:0000250" key="1"/>
<evidence type="ECO:0000255" key="2">
    <source>
        <dbReference type="PROSITE-ProRule" id="PRU01246"/>
    </source>
</evidence>
<evidence type="ECO:0000255" key="3">
    <source>
        <dbReference type="PROSITE-ProRule" id="PRU01248"/>
    </source>
</evidence>
<evidence type="ECO:0000305" key="4"/>